<keyword id="KW-0002">3D-structure</keyword>
<keyword id="KW-0106">Calcium</keyword>
<keyword id="KW-0186">Copper</keyword>
<keyword id="KW-0903">Direct protein sequencing</keyword>
<keyword id="KW-0479">Metal-binding</keyword>
<keyword id="KW-0560">Oxidoreductase</keyword>
<keyword id="KW-0574">Periplasm</keyword>
<keyword id="KW-0732">Signal</keyword>
<evidence type="ECO:0000250" key="1"/>
<evidence type="ECO:0000255" key="2"/>
<evidence type="ECO:0000269" key="3">
    <source>
    </source>
</evidence>
<evidence type="ECO:0000305" key="4"/>
<evidence type="ECO:0007829" key="5">
    <source>
        <dbReference type="PDB" id="3SBP"/>
    </source>
</evidence>
<evidence type="ECO:0007829" key="6">
    <source>
        <dbReference type="PDB" id="6Y77"/>
    </source>
</evidence>
<evidence type="ECO:0007829" key="7">
    <source>
        <dbReference type="PDB" id="7AQ7"/>
    </source>
</evidence>
<evidence type="ECO:0007829" key="8">
    <source>
        <dbReference type="PDB" id="7AQ9"/>
    </source>
</evidence>
<evidence type="ECO:0007829" key="9">
    <source>
        <dbReference type="PDB" id="7AQA"/>
    </source>
</evidence>
<name>NOSZ_STUST</name>
<reference key="1">
    <citation type="journal article" date="1988" name="J. Bacteriol.">
        <title>Molecular cloning, heterologous expression, and primary structure of the structural gene for the copper enzyme nitrous oxide reductase from denitrifying Pseudomonas stutzeri.</title>
        <authorList>
            <person name="Viebrock A."/>
            <person name="Zumft W.G."/>
        </authorList>
    </citation>
    <scope>NUCLEOTIDE SEQUENCE [GENOMIC DNA]</scope>
    <scope>PARTIAL PROTEIN SEQUENCE</scope>
    <source>
        <strain>ATCC 14405 / JCM 20778 / CIP 107696 / IAM 12931 / LMG 2243 / NCIMB 568 / Baumann 218 / ZoBell 632</strain>
    </source>
</reference>
<reference key="2">
    <citation type="journal article" date="1990" name="Eur. J. Biochem.">
        <title>Nitrous oxide reductase from denitrifying Pseudomonas stutzeri. Genes for copper-processing and properties of the deduced products, including a new member of the family of ATP/GTP-binding proteins.</title>
        <authorList>
            <person name="Zumft W.G."/>
            <person name="Viebrock-Sambale A."/>
            <person name="Braun C."/>
        </authorList>
    </citation>
    <scope>NUCLEOTIDE SEQUENCE [GENOMIC DNA]</scope>
    <source>
        <strain>ATCC 14405 / JCM 20778 / CIP 107696 / IAM 12931 / LMG 2243 / NCIMB 568 / Baumann 218 / ZoBell 632</strain>
    </source>
</reference>
<reference key="3">
    <citation type="journal article" date="1992" name="J. Bacteriol.">
        <title>NosR, a membrane-bound regulatory component necessary for expression of nitrous oxide reductase in denitrifying Pseudomonas stutzeri.</title>
        <authorList>
            <person name="Cuypers H."/>
            <person name="Viebrock-Sambale A."/>
            <person name="Zumft W.G."/>
        </authorList>
    </citation>
    <scope>NUCLEOTIDE SEQUENCE [GENOMIC DNA] OF 1-26</scope>
    <source>
        <strain>ATCC 14405 / JCM 20778 / CIP 107696 / IAM 12931 / LMG 2243 / NCIMB 568 / Baumann 218 / ZoBell 632</strain>
    </source>
</reference>
<reference key="4">
    <citation type="journal article" date="1985" name="Eur. J. Biochem.">
        <title>Nitrous oxide reductase from denitrifying Pseudomonas perfectomarina. Purification and properties of a novel multicopper enzyme.</title>
        <authorList>
            <person name="Coyle C.L."/>
            <person name="Zumft W.G."/>
            <person name="Kroneck P.M."/>
            <person name="Korner H."/>
            <person name="Jakob W."/>
        </authorList>
    </citation>
    <scope>FUNCTION</scope>
    <scope>CATALYTIC ACTIVITY</scope>
    <scope>SUBUNIT</scope>
    <scope>COFACTOR</scope>
</reference>
<reference key="5">
    <citation type="journal article" date="1989" name="Proc. Natl. Acad. Sci. U.S.A.">
        <title>Pseudomonas stutzeri N2O reductase contains CuA-type sites.</title>
        <authorList>
            <person name="Scott R.A."/>
            <person name="Zumft W.G."/>
            <person name="Coyle C.L."/>
            <person name="Dooley D.M."/>
        </authorList>
    </citation>
    <scope>CHARACTERIZATION</scope>
</reference>
<reference key="6">
    <citation type="journal article" date="2001" name="J. Am. Chem. Soc.">
        <title>Characterization of the copper-sulfur chromophores in nitrous oxide reductase by resonance Raman spectroscopy: evidence for sulfur coordination in the catalytic cluster.</title>
        <authorList>
            <person name="Alvarez M.L."/>
            <person name="Ai J."/>
            <person name="Zumft W.G."/>
            <person name="Sanders-Loehr J."/>
            <person name="Dooley D.M."/>
        </authorList>
    </citation>
    <scope>CHARACTERIZATION</scope>
</reference>
<organism>
    <name type="scientific">Stutzerimonas stutzeri</name>
    <name type="common">Pseudomonas stutzeri</name>
    <dbReference type="NCBI Taxonomy" id="316"/>
    <lineage>
        <taxon>Bacteria</taxon>
        <taxon>Pseudomonadati</taxon>
        <taxon>Pseudomonadota</taxon>
        <taxon>Gammaproteobacteria</taxon>
        <taxon>Pseudomonadales</taxon>
        <taxon>Pseudomonadaceae</taxon>
        <taxon>Stutzerimonas</taxon>
    </lineage>
</organism>
<proteinExistence type="evidence at protein level"/>
<sequence>MSDKDSKNTPQVPEKLGLSRRGFLGASAVTGAAVAATALGGAVMTRESWAQAVKESKQKIHVGPGELDDYYGFWSGGHQGEVRVLGVPSMRELMRIPVFNVDSATGWGLTNESRHIMGDSAKFLNGDCHHPHISMTDGKYDGKYLFINDKANSRVARIRLDIMKCDKMITVPNVQAIHGLRLQKVPHTKYVFANAEFIIPHPNDGKVFDLQDENSYTMYNAIDAETMEMAFQVIVDGNLDNTDADYTGRFAAATCYNSEKAFDLGGMMRNERDWVVVFDIHAVEAAVKAGDFITLGDSKTPVLDGRKKDGKDSKFTRYVPVPKNPHGCNTSSDGKYFIAAGKLSPTCSMIAIDKLPDLFAGKLADPRDVIVGEPELGLGPLHTTFDGRGNAYTTLFIDSQVVKWNMEEAVRAYKGEKVNYIKQKLDVHYQPGHLHASLCETNEADGKWLVALSKFSKDRFLPVGPLHPENDQLIDISGDEMKLVHDGPTFAEPHDCIMARRDQIKTKKIWDRNDPFFAPTVEMAKKDGINLDTDNKVIRDGNKVRVYMTSMAPAFGVQEFTVKQGDEVTVTITNIDQIEDVSHGFVVVNHGVSMEISPQQTSSITFVADKPGLHWYYCSWFCHALHMEMVGRMMVEPA</sequence>
<protein>
    <recommendedName>
        <fullName>Nitrous-oxide reductase</fullName>
        <ecNumber>1.7.2.4</ecNumber>
    </recommendedName>
    <alternativeName>
        <fullName>N(2)OR</fullName>
    </alternativeName>
    <alternativeName>
        <fullName>N2O reductase</fullName>
    </alternativeName>
</protein>
<gene>
    <name type="primary">nosZ</name>
</gene>
<accession>P19573</accession>
<accession>P19846</accession>
<accession>Q6LAE4</accession>
<dbReference type="EC" id="1.7.2.4"/>
<dbReference type="EMBL" id="X53676">
    <property type="protein sequence ID" value="CAA37714.2"/>
    <property type="molecule type" value="Genomic_DNA"/>
</dbReference>
<dbReference type="PIR" id="A31845">
    <property type="entry name" value="A31845"/>
</dbReference>
<dbReference type="RefSeq" id="WP_003279971.1">
    <property type="nucleotide sequence ID" value="NZ_CP036186.1"/>
</dbReference>
<dbReference type="PDB" id="3SBP">
    <property type="method" value="X-ray"/>
    <property type="resolution" value="2.10 A"/>
    <property type="chains" value="A/B/C/D/E/F/G/H=1-638"/>
</dbReference>
<dbReference type="PDB" id="3SBQ">
    <property type="method" value="X-ray"/>
    <property type="resolution" value="1.70 A"/>
    <property type="chains" value="A/B=1-638"/>
</dbReference>
<dbReference type="PDB" id="3SBR">
    <property type="method" value="X-ray"/>
    <property type="resolution" value="2.24 A"/>
    <property type="chains" value="A/B/C/D/E/F/G/H=1-638"/>
</dbReference>
<dbReference type="PDB" id="6RKZ">
    <property type="method" value="X-ray"/>
    <property type="resolution" value="1.60 A"/>
    <property type="chains" value="A/B=1-638"/>
</dbReference>
<dbReference type="PDB" id="6RL0">
    <property type="method" value="X-ray"/>
    <property type="resolution" value="1.78 A"/>
    <property type="chains" value="A/B/C/D=1-638"/>
</dbReference>
<dbReference type="PDB" id="6Y6Y">
    <property type="method" value="X-ray"/>
    <property type="resolution" value="1.67 A"/>
    <property type="chains" value="A/B=1-638"/>
</dbReference>
<dbReference type="PDB" id="6Y71">
    <property type="method" value="X-ray"/>
    <property type="resolution" value="1.64 A"/>
    <property type="chains" value="A/B=1-638"/>
</dbReference>
<dbReference type="PDB" id="6Y72">
    <property type="method" value="X-ray"/>
    <property type="resolution" value="1.55 A"/>
    <property type="chains" value="A/B=1-638"/>
</dbReference>
<dbReference type="PDB" id="6Y77">
    <property type="method" value="X-ray"/>
    <property type="resolution" value="1.49 A"/>
    <property type="chains" value="A/B=1-638"/>
</dbReference>
<dbReference type="PDB" id="6Y7D">
    <property type="method" value="X-ray"/>
    <property type="resolution" value="1.60 A"/>
    <property type="chains" value="A/B=1-638"/>
</dbReference>
<dbReference type="PDB" id="6Y7E">
    <property type="method" value="X-ray"/>
    <property type="resolution" value="1.60 A"/>
    <property type="chains" value="A/B=1-638"/>
</dbReference>
<dbReference type="PDB" id="7APY">
    <property type="method" value="X-ray"/>
    <property type="resolution" value="1.78 A"/>
    <property type="chains" value="A/B=1-638"/>
</dbReference>
<dbReference type="PDB" id="7AQ0">
    <property type="method" value="X-ray"/>
    <property type="resolution" value="1.58 A"/>
    <property type="chains" value="A/B=1-638"/>
</dbReference>
<dbReference type="PDB" id="7AQ2">
    <property type="method" value="X-ray"/>
    <property type="resolution" value="1.68 A"/>
    <property type="chains" value="A/B=1-638"/>
</dbReference>
<dbReference type="PDB" id="7AQ3">
    <property type="method" value="X-ray"/>
    <property type="resolution" value="1.64 A"/>
    <property type="chains" value="A/B=1-638"/>
</dbReference>
<dbReference type="PDB" id="7AQ4">
    <property type="method" value="X-ray"/>
    <property type="resolution" value="1.71 A"/>
    <property type="chains" value="A/B=1-638"/>
</dbReference>
<dbReference type="PDB" id="7AQ5">
    <property type="method" value="X-ray"/>
    <property type="resolution" value="1.70 A"/>
    <property type="chains" value="A/B=1-638"/>
</dbReference>
<dbReference type="PDB" id="7AQ6">
    <property type="method" value="X-ray"/>
    <property type="resolution" value="1.51 A"/>
    <property type="chains" value="A/B=1-638"/>
</dbReference>
<dbReference type="PDB" id="7AQ7">
    <property type="method" value="X-ray"/>
    <property type="resolution" value="1.61 A"/>
    <property type="chains" value="A/B=1-638"/>
</dbReference>
<dbReference type="PDB" id="7AQ8">
    <property type="method" value="X-ray"/>
    <property type="resolution" value="1.79 A"/>
    <property type="chains" value="A/B=1-638"/>
</dbReference>
<dbReference type="PDB" id="7AQ9">
    <property type="method" value="X-ray"/>
    <property type="resolution" value="1.58 A"/>
    <property type="chains" value="A/B=1-638"/>
</dbReference>
<dbReference type="PDB" id="7AQA">
    <property type="method" value="X-ray"/>
    <property type="resolution" value="1.50 A"/>
    <property type="chains" value="A/B=1-638"/>
</dbReference>
<dbReference type="PDB" id="7QBA">
    <property type="method" value="EM"/>
    <property type="resolution" value="3.78 A"/>
    <property type="chains" value="H/I=1-638"/>
</dbReference>
<dbReference type="PDBsum" id="3SBP"/>
<dbReference type="PDBsum" id="3SBQ"/>
<dbReference type="PDBsum" id="3SBR"/>
<dbReference type="PDBsum" id="6RKZ"/>
<dbReference type="PDBsum" id="6RL0"/>
<dbReference type="PDBsum" id="6Y6Y"/>
<dbReference type="PDBsum" id="6Y71"/>
<dbReference type="PDBsum" id="6Y72"/>
<dbReference type="PDBsum" id="6Y77"/>
<dbReference type="PDBsum" id="6Y7D"/>
<dbReference type="PDBsum" id="6Y7E"/>
<dbReference type="PDBsum" id="7APY"/>
<dbReference type="PDBsum" id="7AQ0"/>
<dbReference type="PDBsum" id="7AQ2"/>
<dbReference type="PDBsum" id="7AQ3"/>
<dbReference type="PDBsum" id="7AQ4"/>
<dbReference type="PDBsum" id="7AQ5"/>
<dbReference type="PDBsum" id="7AQ6"/>
<dbReference type="PDBsum" id="7AQ7"/>
<dbReference type="PDBsum" id="7AQ8"/>
<dbReference type="PDBsum" id="7AQ9"/>
<dbReference type="PDBsum" id="7AQA"/>
<dbReference type="PDBsum" id="7QBA"/>
<dbReference type="EMDB" id="EMD-13885"/>
<dbReference type="SMR" id="P19573"/>
<dbReference type="DIP" id="DIP-59162N"/>
<dbReference type="KEGG" id="ag:CAA37714"/>
<dbReference type="eggNOG" id="COG4263">
    <property type="taxonomic scope" value="Bacteria"/>
</dbReference>
<dbReference type="BioCyc" id="MetaCyc:MONOMER-243"/>
<dbReference type="BRENDA" id="1.7.2.4">
    <property type="organism ID" value="5158"/>
</dbReference>
<dbReference type="UniPathway" id="UPA00652">
    <property type="reaction ID" value="UER00709"/>
</dbReference>
<dbReference type="EvolutionaryTrace" id="P19573"/>
<dbReference type="GO" id="GO:0016020">
    <property type="term" value="C:membrane"/>
    <property type="evidence" value="ECO:0007669"/>
    <property type="project" value="InterPro"/>
</dbReference>
<dbReference type="GO" id="GO:0042597">
    <property type="term" value="C:periplasmic space"/>
    <property type="evidence" value="ECO:0000314"/>
    <property type="project" value="CACAO"/>
</dbReference>
<dbReference type="GO" id="GO:0005509">
    <property type="term" value="F:calcium ion binding"/>
    <property type="evidence" value="ECO:0007669"/>
    <property type="project" value="UniProtKB-UniRule"/>
</dbReference>
<dbReference type="GO" id="GO:0005507">
    <property type="term" value="F:copper ion binding"/>
    <property type="evidence" value="ECO:0007669"/>
    <property type="project" value="UniProtKB-UniRule"/>
</dbReference>
<dbReference type="GO" id="GO:0004129">
    <property type="term" value="F:cytochrome-c oxidase activity"/>
    <property type="evidence" value="ECO:0007669"/>
    <property type="project" value="InterPro"/>
</dbReference>
<dbReference type="GO" id="GO:0050304">
    <property type="term" value="F:nitrous-oxide reductase activity"/>
    <property type="evidence" value="ECO:0007669"/>
    <property type="project" value="UniProtKB-UniRule"/>
</dbReference>
<dbReference type="GO" id="GO:0015677">
    <property type="term" value="P:copper ion import"/>
    <property type="evidence" value="ECO:0000315"/>
    <property type="project" value="CACAO"/>
</dbReference>
<dbReference type="GO" id="GO:0019333">
    <property type="term" value="P:denitrification pathway"/>
    <property type="evidence" value="ECO:0007669"/>
    <property type="project" value="UniProtKB-UniPathway"/>
</dbReference>
<dbReference type="CDD" id="cd04223">
    <property type="entry name" value="N2OR_C"/>
    <property type="match status" value="1"/>
</dbReference>
<dbReference type="FunFam" id="2.130.10.10:FF:001102">
    <property type="entry name" value="Nitrous-oxide reductase"/>
    <property type="match status" value="1"/>
</dbReference>
<dbReference type="FunFam" id="2.60.40.420:FF:000095">
    <property type="entry name" value="Nitrous-oxide reductase"/>
    <property type="match status" value="1"/>
</dbReference>
<dbReference type="Gene3D" id="2.60.40.420">
    <property type="entry name" value="Cupredoxins - blue copper proteins"/>
    <property type="match status" value="1"/>
</dbReference>
<dbReference type="Gene3D" id="2.130.10.10">
    <property type="entry name" value="YVTN repeat-like/Quinoprotein amine dehydrogenase"/>
    <property type="match status" value="1"/>
</dbReference>
<dbReference type="HAMAP" id="MF_00716">
    <property type="entry name" value="NosZ"/>
    <property type="match status" value="1"/>
</dbReference>
<dbReference type="InterPro" id="IPR002429">
    <property type="entry name" value="CcO_II-like_C"/>
</dbReference>
<dbReference type="InterPro" id="IPR001505">
    <property type="entry name" value="Copper_CuA"/>
</dbReference>
<dbReference type="InterPro" id="IPR008972">
    <property type="entry name" value="Cupredoxin"/>
</dbReference>
<dbReference type="InterPro" id="IPR011045">
    <property type="entry name" value="N2O_reductase_N"/>
</dbReference>
<dbReference type="InterPro" id="IPR034205">
    <property type="entry name" value="N2OR_C"/>
</dbReference>
<dbReference type="InterPro" id="IPR023644">
    <property type="entry name" value="NO_Rdtase"/>
</dbReference>
<dbReference type="InterPro" id="IPR041114">
    <property type="entry name" value="Nos_propeller"/>
</dbReference>
<dbReference type="InterPro" id="IPR041142">
    <property type="entry name" value="NOS_propeller_2"/>
</dbReference>
<dbReference type="InterPro" id="IPR051403">
    <property type="entry name" value="NosZ/Cyto_c_oxidase_sub2"/>
</dbReference>
<dbReference type="InterPro" id="IPR006311">
    <property type="entry name" value="TAT_signal"/>
</dbReference>
<dbReference type="InterPro" id="IPR019546">
    <property type="entry name" value="TAT_signal_bac_arc"/>
</dbReference>
<dbReference type="InterPro" id="IPR015943">
    <property type="entry name" value="WD40/YVTN_repeat-like_dom_sf"/>
</dbReference>
<dbReference type="NCBIfam" id="TIGR04244">
    <property type="entry name" value="nitrous_NosZ_RR"/>
    <property type="match status" value="1"/>
</dbReference>
<dbReference type="NCBIfam" id="TIGR01409">
    <property type="entry name" value="TAT_signal_seq"/>
    <property type="match status" value="1"/>
</dbReference>
<dbReference type="PANTHER" id="PTHR42838">
    <property type="entry name" value="CYTOCHROME C OXIDASE SUBUNIT II"/>
    <property type="match status" value="1"/>
</dbReference>
<dbReference type="PANTHER" id="PTHR42838:SF2">
    <property type="entry name" value="NITROUS-OXIDE REDUCTASE"/>
    <property type="match status" value="1"/>
</dbReference>
<dbReference type="Pfam" id="PF00116">
    <property type="entry name" value="COX2"/>
    <property type="match status" value="1"/>
</dbReference>
<dbReference type="Pfam" id="PF18764">
    <property type="entry name" value="nos_propeller"/>
    <property type="match status" value="1"/>
</dbReference>
<dbReference type="Pfam" id="PF18793">
    <property type="entry name" value="nos_propeller_2"/>
    <property type="match status" value="1"/>
</dbReference>
<dbReference type="SUPFAM" id="SSF49503">
    <property type="entry name" value="Cupredoxins"/>
    <property type="match status" value="1"/>
</dbReference>
<dbReference type="SUPFAM" id="SSF50974">
    <property type="entry name" value="Nitrous oxide reductase, N-terminal domain"/>
    <property type="match status" value="1"/>
</dbReference>
<dbReference type="PROSITE" id="PS00078">
    <property type="entry name" value="COX2"/>
    <property type="match status" value="1"/>
</dbReference>
<dbReference type="PROSITE" id="PS50857">
    <property type="entry name" value="COX2_CUA"/>
    <property type="match status" value="1"/>
</dbReference>
<dbReference type="PROSITE" id="PS51318">
    <property type="entry name" value="TAT"/>
    <property type="match status" value="1"/>
</dbReference>
<comment type="function">
    <text evidence="3">Nitrous-oxide reductase is part of a bacterial respiratory system which is activated under anaerobic conditions in the presence of nitrate or nitrous oxide.</text>
</comment>
<comment type="catalytic activity">
    <reaction evidence="3">
        <text>N2 + 2 Fe(III)-[cytochrome c] + H2O = nitrous oxide + 2 Fe(II)-[cytochrome c] + 2 H(+)</text>
        <dbReference type="Rhea" id="RHEA:43108"/>
        <dbReference type="Rhea" id="RHEA-COMP:10350"/>
        <dbReference type="Rhea" id="RHEA-COMP:14399"/>
        <dbReference type="ChEBI" id="CHEBI:15377"/>
        <dbReference type="ChEBI" id="CHEBI:15378"/>
        <dbReference type="ChEBI" id="CHEBI:17045"/>
        <dbReference type="ChEBI" id="CHEBI:17997"/>
        <dbReference type="ChEBI" id="CHEBI:29033"/>
        <dbReference type="ChEBI" id="CHEBI:29034"/>
        <dbReference type="EC" id="1.7.2.4"/>
    </reaction>
</comment>
<comment type="cofactor">
    <cofactor evidence="3">
        <name>Ca(2+)</name>
        <dbReference type="ChEBI" id="CHEBI:29108"/>
    </cofactor>
    <text evidence="3">Binds 2 calcium ions per subunit.</text>
</comment>
<comment type="cofactor">
    <cofactor evidence="3">
        <name>Cu cation</name>
        <dbReference type="ChEBI" id="CHEBI:23378"/>
    </cofactor>
    <text evidence="3">Binds 6 Cu cations. Each subunit contains 2 copper centers; Cu(A) (binuclear) and Cu(Z) (tetranuclear). Cu(Z) is thought to be the site of nitrous oxide reduction.</text>
</comment>
<comment type="pathway">
    <text>Nitrogen metabolism; nitrate reduction (denitrification); dinitrogen from nitrate: step 4/4.</text>
</comment>
<comment type="subunit">
    <text evidence="3">Homodimer.</text>
</comment>
<comment type="subcellular location">
    <subcellularLocation>
        <location>Periplasm</location>
    </subcellularLocation>
</comment>
<comment type="PTM">
    <text>Predicted to be exported by the Tat system. The position of the signal peptide cleavage has not been experimentally proven.</text>
</comment>
<comment type="PTM">
    <text>The N-terminus is blocked.</text>
</comment>
<comment type="similarity">
    <text evidence="4">Belongs to the NosZ family.</text>
</comment>
<comment type="similarity">
    <text evidence="4">In the C-terminal section; belongs to the cytochrome c oxidase subunit 2 family.</text>
</comment>
<feature type="signal peptide" description="Tat-type signal" evidence="2">
    <location>
        <begin position="1"/>
        <end position="52"/>
    </location>
</feature>
<feature type="chain" id="PRO_0000019831" description="Nitrous-oxide reductase">
    <location>
        <begin position="53"/>
        <end position="638"/>
    </location>
</feature>
<feature type="region of interest" description="COX2-like">
    <location>
        <begin position="542"/>
        <end position="638"/>
    </location>
</feature>
<feature type="binding site" evidence="1">
    <location>
        <position position="129"/>
    </location>
    <ligand>
        <name>Cu cation</name>
        <dbReference type="ChEBI" id="CHEBI:23378"/>
        <label>Z2</label>
    </ligand>
</feature>
<feature type="binding site" evidence="1">
    <location>
        <position position="130"/>
    </location>
    <ligand>
        <name>Cu cation</name>
        <dbReference type="ChEBI" id="CHEBI:23378"/>
        <label>Z3</label>
    </ligand>
</feature>
<feature type="binding site" evidence="1">
    <location>
        <position position="178"/>
    </location>
    <ligand>
        <name>Cu cation</name>
        <dbReference type="ChEBI" id="CHEBI:23378"/>
        <label>Z2</label>
    </ligand>
</feature>
<feature type="binding site" evidence="1">
    <location>
        <position position="256"/>
    </location>
    <ligand>
        <name>Ca(2+)</name>
        <dbReference type="ChEBI" id="CHEBI:29108"/>
        <label>2</label>
    </ligand>
</feature>
<feature type="binding site" evidence="1">
    <location>
        <position position="259"/>
    </location>
    <ligand>
        <name>Ca(2+)</name>
        <dbReference type="ChEBI" id="CHEBI:29108"/>
        <label>2</label>
    </ligand>
</feature>
<feature type="binding site" evidence="1">
    <location>
        <position position="267"/>
    </location>
    <ligand>
        <name>Ca(2+)</name>
        <dbReference type="ChEBI" id="CHEBI:29108"/>
        <label>2</label>
    </ligand>
</feature>
<feature type="binding site" evidence="1">
    <location>
        <position position="273"/>
    </location>
    <ligand>
        <name>Ca(2+)</name>
        <dbReference type="ChEBI" id="CHEBI:29108"/>
        <label>2</label>
    </ligand>
</feature>
<feature type="binding site" evidence="1">
    <location>
        <position position="324"/>
    </location>
    <ligand>
        <name>Ca(2+)</name>
        <dbReference type="ChEBI" id="CHEBI:29108"/>
        <label>2</label>
    </ligand>
</feature>
<feature type="binding site" evidence="1">
    <location>
        <position position="326"/>
    </location>
    <ligand>
        <name>Cu cation</name>
        <dbReference type="ChEBI" id="CHEBI:23378"/>
        <label>Z1</label>
    </ligand>
</feature>
<feature type="binding site" evidence="1">
    <location>
        <position position="382"/>
    </location>
    <ligand>
        <name>Cu cation</name>
        <dbReference type="ChEBI" id="CHEBI:23378"/>
        <label>Z1</label>
    </ligand>
</feature>
<feature type="binding site" evidence="1">
    <location>
        <position position="433"/>
    </location>
    <ligand>
        <name>Cu cation</name>
        <dbReference type="ChEBI" id="CHEBI:23378"/>
        <label>Z3</label>
    </ligand>
</feature>
<feature type="binding site" evidence="1">
    <location>
        <position position="454"/>
    </location>
    <ligand>
        <name>Ca(2+)</name>
        <dbReference type="ChEBI" id="CHEBI:29108"/>
        <label>1</label>
    </ligand>
</feature>
<feature type="binding site" evidence="1">
    <location>
        <position position="469"/>
    </location>
    <ligand>
        <name>Ca(2+)</name>
        <dbReference type="ChEBI" id="CHEBI:29108"/>
        <label>1</label>
    </ligand>
</feature>
<feature type="binding site" evidence="1">
    <location>
        <position position="494"/>
    </location>
    <ligand>
        <name>Cu cation</name>
        <dbReference type="ChEBI" id="CHEBI:23378"/>
        <label>Z4</label>
    </ligand>
</feature>
<feature type="binding site" evidence="1">
    <location>
        <position position="583"/>
    </location>
    <ligand>
        <name>Cu cation</name>
        <dbReference type="ChEBI" id="CHEBI:23378"/>
        <label>A1</label>
    </ligand>
</feature>
<feature type="binding site" evidence="1">
    <location>
        <position position="618"/>
    </location>
    <ligand>
        <name>Cu cation</name>
        <dbReference type="ChEBI" id="CHEBI:23378"/>
        <label>A1</label>
    </ligand>
</feature>
<feature type="binding site" evidence="1">
    <location>
        <position position="618"/>
    </location>
    <ligand>
        <name>Cu cation</name>
        <dbReference type="ChEBI" id="CHEBI:23378"/>
        <label>A2</label>
    </ligand>
</feature>
<feature type="binding site" evidence="1">
    <location>
        <position position="620"/>
    </location>
    <ligand>
        <name>Cu cation</name>
        <dbReference type="ChEBI" id="CHEBI:23378"/>
        <label>A2</label>
    </ligand>
</feature>
<feature type="binding site" evidence="1">
    <location>
        <position position="622"/>
    </location>
    <ligand>
        <name>Cu cation</name>
        <dbReference type="ChEBI" id="CHEBI:23378"/>
        <label>A1</label>
    </ligand>
</feature>
<feature type="binding site" evidence="1">
    <location>
        <position position="622"/>
    </location>
    <ligand>
        <name>Cu cation</name>
        <dbReference type="ChEBI" id="CHEBI:23378"/>
        <label>A2</label>
    </ligand>
</feature>
<feature type="binding site" evidence="1">
    <location>
        <position position="626"/>
    </location>
    <ligand>
        <name>Cu cation</name>
        <dbReference type="ChEBI" id="CHEBI:23378"/>
        <label>A2</label>
    </ligand>
</feature>
<feature type="binding site" evidence="1">
    <location>
        <position position="629"/>
    </location>
    <ligand>
        <name>Cu cation</name>
        <dbReference type="ChEBI" id="CHEBI:23378"/>
        <label>A1</label>
    </ligand>
</feature>
<feature type="sequence conflict" description="In Ref. 3." evidence="4" ref="3">
    <original>E</original>
    <variation>EE</variation>
    <location>
        <position position="14"/>
    </location>
</feature>
<feature type="strand" evidence="6">
    <location>
        <begin position="69"/>
        <end position="75"/>
    </location>
</feature>
<feature type="helix" evidence="6">
    <location>
        <begin position="77"/>
        <end position="79"/>
    </location>
</feature>
<feature type="strand" evidence="6">
    <location>
        <begin position="82"/>
        <end position="87"/>
    </location>
</feature>
<feature type="turn" evidence="6">
    <location>
        <begin position="88"/>
        <end position="90"/>
    </location>
</feature>
<feature type="strand" evidence="6">
    <location>
        <begin position="91"/>
        <end position="96"/>
    </location>
</feature>
<feature type="strand" evidence="6">
    <location>
        <begin position="98"/>
        <end position="100"/>
    </location>
</feature>
<feature type="turn" evidence="6">
    <location>
        <begin position="103"/>
        <end position="105"/>
    </location>
</feature>
<feature type="turn" evidence="6">
    <location>
        <begin position="107"/>
        <end position="109"/>
    </location>
</feature>
<feature type="helix" evidence="6">
    <location>
        <begin position="111"/>
        <end position="117"/>
    </location>
</feature>
<feature type="helix" evidence="6">
    <location>
        <begin position="118"/>
        <end position="122"/>
    </location>
</feature>
<feature type="strand" evidence="6">
    <location>
        <begin position="132"/>
        <end position="136"/>
    </location>
</feature>
<feature type="strand" evidence="6">
    <location>
        <begin position="139"/>
        <end position="149"/>
    </location>
</feature>
<feature type="turn" evidence="6">
    <location>
        <begin position="150"/>
        <end position="153"/>
    </location>
</feature>
<feature type="strand" evidence="6">
    <location>
        <begin position="154"/>
        <end position="159"/>
    </location>
</feature>
<feature type="turn" evidence="6">
    <location>
        <begin position="160"/>
        <end position="163"/>
    </location>
</feature>
<feature type="strand" evidence="6">
    <location>
        <begin position="164"/>
        <end position="170"/>
    </location>
</feature>
<feature type="strand" evidence="6">
    <location>
        <begin position="175"/>
        <end position="182"/>
    </location>
</feature>
<feature type="strand" evidence="6">
    <location>
        <begin position="185"/>
        <end position="187"/>
    </location>
</feature>
<feature type="strand" evidence="6">
    <location>
        <begin position="190"/>
        <end position="197"/>
    </location>
</feature>
<feature type="strand" evidence="6">
    <location>
        <begin position="199"/>
        <end position="202"/>
    </location>
</feature>
<feature type="strand" evidence="6">
    <location>
        <begin position="204"/>
        <end position="206"/>
    </location>
</feature>
<feature type="strand" evidence="6">
    <location>
        <begin position="215"/>
        <end position="223"/>
    </location>
</feature>
<feature type="turn" evidence="6">
    <location>
        <begin position="224"/>
        <end position="226"/>
    </location>
</feature>
<feature type="strand" evidence="6">
    <location>
        <begin position="228"/>
        <end position="244"/>
    </location>
</feature>
<feature type="strand" evidence="6">
    <location>
        <begin position="246"/>
        <end position="256"/>
    </location>
</feature>
<feature type="helix" evidence="9">
    <location>
        <begin position="264"/>
        <end position="267"/>
    </location>
</feature>
<feature type="strand" evidence="6">
    <location>
        <begin position="274"/>
        <end position="279"/>
    </location>
</feature>
<feature type="helix" evidence="6">
    <location>
        <begin position="280"/>
        <end position="289"/>
    </location>
</feature>
<feature type="strand" evidence="7">
    <location>
        <begin position="293"/>
        <end position="295"/>
    </location>
</feature>
<feature type="strand" evidence="6">
    <location>
        <begin position="302"/>
        <end position="304"/>
    </location>
</feature>
<feature type="strand" evidence="5">
    <location>
        <begin position="308"/>
        <end position="310"/>
    </location>
</feature>
<feature type="strand" evidence="6">
    <location>
        <begin position="316"/>
        <end position="320"/>
    </location>
</feature>
<feature type="strand" evidence="6">
    <location>
        <begin position="322"/>
        <end position="324"/>
    </location>
</feature>
<feature type="strand" evidence="6">
    <location>
        <begin position="328"/>
        <end position="330"/>
    </location>
</feature>
<feature type="strand" evidence="6">
    <location>
        <begin position="336"/>
        <end position="340"/>
    </location>
</feature>
<feature type="strand" evidence="6">
    <location>
        <begin position="344"/>
        <end position="351"/>
    </location>
</feature>
<feature type="helix" evidence="6">
    <location>
        <begin position="352"/>
        <end position="354"/>
    </location>
</feature>
<feature type="helix" evidence="6">
    <location>
        <begin position="355"/>
        <end position="359"/>
    </location>
</feature>
<feature type="strand" evidence="8">
    <location>
        <begin position="363"/>
        <end position="365"/>
    </location>
</feature>
<feature type="helix" evidence="6">
    <location>
        <begin position="366"/>
        <end position="369"/>
    </location>
</feature>
<feature type="strand" evidence="6">
    <location>
        <begin position="370"/>
        <end position="372"/>
    </location>
</feature>
<feature type="strand" evidence="6">
    <location>
        <begin position="380"/>
        <end position="385"/>
    </location>
</feature>
<feature type="strand" evidence="6">
    <location>
        <begin position="387"/>
        <end position="395"/>
    </location>
</feature>
<feature type="turn" evidence="6">
    <location>
        <begin position="396"/>
        <end position="399"/>
    </location>
</feature>
<feature type="strand" evidence="6">
    <location>
        <begin position="400"/>
        <end position="405"/>
    </location>
</feature>
<feature type="helix" evidence="6">
    <location>
        <begin position="406"/>
        <end position="413"/>
    </location>
</feature>
<feature type="strand" evidence="6">
    <location>
        <begin position="421"/>
        <end position="426"/>
    </location>
</feature>
<feature type="strand" evidence="6">
    <location>
        <begin position="431"/>
        <end position="436"/>
    </location>
</feature>
<feature type="turn" evidence="6">
    <location>
        <begin position="437"/>
        <end position="440"/>
    </location>
</feature>
<feature type="strand" evidence="6">
    <location>
        <begin position="448"/>
        <end position="454"/>
    </location>
</feature>
<feature type="helix" evidence="6">
    <location>
        <begin position="457"/>
        <end position="459"/>
    </location>
</feature>
<feature type="strand" evidence="9">
    <location>
        <begin position="464"/>
        <end position="466"/>
    </location>
</feature>
<feature type="strand" evidence="6">
    <location>
        <begin position="469"/>
        <end position="475"/>
    </location>
</feature>
<feature type="strand" evidence="6">
    <location>
        <begin position="477"/>
        <end position="480"/>
    </location>
</feature>
<feature type="strand" evidence="6">
    <location>
        <begin position="482"/>
        <end position="489"/>
    </location>
</feature>
<feature type="strand" evidence="6">
    <location>
        <begin position="496"/>
        <end position="500"/>
    </location>
</feature>
<feature type="helix" evidence="6">
    <location>
        <begin position="501"/>
        <end position="503"/>
    </location>
</feature>
<feature type="helix" evidence="6">
    <location>
        <begin position="515"/>
        <end position="517"/>
    </location>
</feature>
<feature type="helix" evidence="6">
    <location>
        <begin position="518"/>
        <end position="526"/>
    </location>
</feature>
<feature type="turn" evidence="6">
    <location>
        <begin position="531"/>
        <end position="533"/>
    </location>
</feature>
<feature type="strand" evidence="6">
    <location>
        <begin position="536"/>
        <end position="540"/>
    </location>
</feature>
<feature type="strand" evidence="6">
    <location>
        <begin position="543"/>
        <end position="551"/>
    </location>
</feature>
<feature type="strand" evidence="6">
    <location>
        <begin position="554"/>
        <end position="556"/>
    </location>
</feature>
<feature type="strand" evidence="6">
    <location>
        <begin position="559"/>
        <end position="563"/>
    </location>
</feature>
<feature type="strand" evidence="6">
    <location>
        <begin position="567"/>
        <end position="574"/>
    </location>
</feature>
<feature type="strand" evidence="6">
    <location>
        <begin position="583"/>
        <end position="587"/>
    </location>
</feature>
<feature type="turn" evidence="6">
    <location>
        <begin position="588"/>
        <end position="591"/>
    </location>
</feature>
<feature type="strand" evidence="6">
    <location>
        <begin position="592"/>
        <end position="596"/>
    </location>
</feature>
<feature type="strand" evidence="6">
    <location>
        <begin position="601"/>
        <end position="607"/>
    </location>
</feature>
<feature type="strand" evidence="6">
    <location>
        <begin position="612"/>
        <end position="617"/>
    </location>
</feature>
<feature type="helix" evidence="6">
    <location>
        <begin position="626"/>
        <end position="628"/>
    </location>
</feature>
<feature type="strand" evidence="6">
    <location>
        <begin position="630"/>
        <end position="636"/>
    </location>
</feature>